<comment type="subunit">
    <text evidence="1">Part of the 50S ribosomal subunit.</text>
</comment>
<comment type="similarity">
    <text evidence="1">Belongs to the bacterial ribosomal protein bL31 family. Type B subfamily.</text>
</comment>
<sequence>MKEGIHPEYREVVFMDVQTGNKFITRSTIHTRETVEMDGKTYPLFKCDVTSESHPFYTGAQTRIVETGRVEKFRARFARTAGTVKSAS</sequence>
<proteinExistence type="inferred from homology"/>
<feature type="chain" id="PRO_0000173207" description="Large ribosomal subunit protein bL31B">
    <location>
        <begin position="1"/>
        <end position="88"/>
    </location>
</feature>
<keyword id="KW-0687">Ribonucleoprotein</keyword>
<keyword id="KW-0689">Ribosomal protein</keyword>
<gene>
    <name evidence="1" type="primary">rpmE2</name>
    <name type="ordered locus">BB3261</name>
</gene>
<organism>
    <name type="scientific">Bordetella bronchiseptica (strain ATCC BAA-588 / NCTC 13252 / RB50)</name>
    <name type="common">Alcaligenes bronchisepticus</name>
    <dbReference type="NCBI Taxonomy" id="257310"/>
    <lineage>
        <taxon>Bacteria</taxon>
        <taxon>Pseudomonadati</taxon>
        <taxon>Pseudomonadota</taxon>
        <taxon>Betaproteobacteria</taxon>
        <taxon>Burkholderiales</taxon>
        <taxon>Alcaligenaceae</taxon>
        <taxon>Bordetella</taxon>
    </lineage>
</organism>
<accession>Q7WHE7</accession>
<name>RL31B_BORBR</name>
<evidence type="ECO:0000255" key="1">
    <source>
        <dbReference type="HAMAP-Rule" id="MF_00502"/>
    </source>
</evidence>
<evidence type="ECO:0000305" key="2"/>
<protein>
    <recommendedName>
        <fullName evidence="1">Large ribosomal subunit protein bL31B</fullName>
    </recommendedName>
    <alternativeName>
        <fullName evidence="2">50S ribosomal protein L31 type B</fullName>
    </alternativeName>
</protein>
<dbReference type="EMBL" id="BX640447">
    <property type="protein sequence ID" value="CAE33753.1"/>
    <property type="molecule type" value="Genomic_DNA"/>
</dbReference>
<dbReference type="RefSeq" id="WP_003810513.1">
    <property type="nucleotide sequence ID" value="NC_002927.3"/>
</dbReference>
<dbReference type="SMR" id="Q7WHE7"/>
<dbReference type="KEGG" id="bbr:BB3261"/>
<dbReference type="eggNOG" id="COG0254">
    <property type="taxonomic scope" value="Bacteria"/>
</dbReference>
<dbReference type="HOGENOM" id="CLU_114306_2_1_4"/>
<dbReference type="Proteomes" id="UP000001027">
    <property type="component" value="Chromosome"/>
</dbReference>
<dbReference type="GO" id="GO:1990904">
    <property type="term" value="C:ribonucleoprotein complex"/>
    <property type="evidence" value="ECO:0007669"/>
    <property type="project" value="UniProtKB-KW"/>
</dbReference>
<dbReference type="GO" id="GO:0005840">
    <property type="term" value="C:ribosome"/>
    <property type="evidence" value="ECO:0007669"/>
    <property type="project" value="UniProtKB-KW"/>
</dbReference>
<dbReference type="GO" id="GO:0003735">
    <property type="term" value="F:structural constituent of ribosome"/>
    <property type="evidence" value="ECO:0007669"/>
    <property type="project" value="InterPro"/>
</dbReference>
<dbReference type="GO" id="GO:0006412">
    <property type="term" value="P:translation"/>
    <property type="evidence" value="ECO:0007669"/>
    <property type="project" value="UniProtKB-UniRule"/>
</dbReference>
<dbReference type="Gene3D" id="4.10.830.30">
    <property type="entry name" value="Ribosomal protein L31"/>
    <property type="match status" value="1"/>
</dbReference>
<dbReference type="HAMAP" id="MF_00502">
    <property type="entry name" value="Ribosomal_bL31_2"/>
    <property type="match status" value="1"/>
</dbReference>
<dbReference type="InterPro" id="IPR034704">
    <property type="entry name" value="Ribosomal_bL28/bL31-like_sf"/>
</dbReference>
<dbReference type="InterPro" id="IPR002150">
    <property type="entry name" value="Ribosomal_bL31"/>
</dbReference>
<dbReference type="InterPro" id="IPR027493">
    <property type="entry name" value="Ribosomal_bL31_B"/>
</dbReference>
<dbReference type="InterPro" id="IPR042105">
    <property type="entry name" value="Ribosomal_bL31_sf"/>
</dbReference>
<dbReference type="NCBIfam" id="TIGR00105">
    <property type="entry name" value="L31"/>
    <property type="match status" value="1"/>
</dbReference>
<dbReference type="NCBIfam" id="NF002462">
    <property type="entry name" value="PRK01678.1"/>
    <property type="match status" value="1"/>
</dbReference>
<dbReference type="PANTHER" id="PTHR33280">
    <property type="entry name" value="50S RIBOSOMAL PROTEIN L31, CHLOROPLASTIC"/>
    <property type="match status" value="1"/>
</dbReference>
<dbReference type="PANTHER" id="PTHR33280:SF1">
    <property type="entry name" value="LARGE RIBOSOMAL SUBUNIT PROTEIN BL31C"/>
    <property type="match status" value="1"/>
</dbReference>
<dbReference type="Pfam" id="PF01197">
    <property type="entry name" value="Ribosomal_L31"/>
    <property type="match status" value="1"/>
</dbReference>
<dbReference type="PRINTS" id="PR01249">
    <property type="entry name" value="RIBOSOMALL31"/>
</dbReference>
<dbReference type="SUPFAM" id="SSF143800">
    <property type="entry name" value="L28p-like"/>
    <property type="match status" value="1"/>
</dbReference>
<dbReference type="PROSITE" id="PS01143">
    <property type="entry name" value="RIBOSOMAL_L31"/>
    <property type="match status" value="1"/>
</dbReference>
<reference key="1">
    <citation type="journal article" date="2003" name="Nat. Genet.">
        <title>Comparative analysis of the genome sequences of Bordetella pertussis, Bordetella parapertussis and Bordetella bronchiseptica.</title>
        <authorList>
            <person name="Parkhill J."/>
            <person name="Sebaihia M."/>
            <person name="Preston A."/>
            <person name="Murphy L.D."/>
            <person name="Thomson N.R."/>
            <person name="Harris D.E."/>
            <person name="Holden M.T.G."/>
            <person name="Churcher C.M."/>
            <person name="Bentley S.D."/>
            <person name="Mungall K.L."/>
            <person name="Cerdeno-Tarraga A.-M."/>
            <person name="Temple L."/>
            <person name="James K.D."/>
            <person name="Harris B."/>
            <person name="Quail M.A."/>
            <person name="Achtman M."/>
            <person name="Atkin R."/>
            <person name="Baker S."/>
            <person name="Basham D."/>
            <person name="Bason N."/>
            <person name="Cherevach I."/>
            <person name="Chillingworth T."/>
            <person name="Collins M."/>
            <person name="Cronin A."/>
            <person name="Davis P."/>
            <person name="Doggett J."/>
            <person name="Feltwell T."/>
            <person name="Goble A."/>
            <person name="Hamlin N."/>
            <person name="Hauser H."/>
            <person name="Holroyd S."/>
            <person name="Jagels K."/>
            <person name="Leather S."/>
            <person name="Moule S."/>
            <person name="Norberczak H."/>
            <person name="O'Neil S."/>
            <person name="Ormond D."/>
            <person name="Price C."/>
            <person name="Rabbinowitsch E."/>
            <person name="Rutter S."/>
            <person name="Sanders M."/>
            <person name="Saunders D."/>
            <person name="Seeger K."/>
            <person name="Sharp S."/>
            <person name="Simmonds M."/>
            <person name="Skelton J."/>
            <person name="Squares R."/>
            <person name="Squares S."/>
            <person name="Stevens K."/>
            <person name="Unwin L."/>
            <person name="Whitehead S."/>
            <person name="Barrell B.G."/>
            <person name="Maskell D.J."/>
        </authorList>
    </citation>
    <scope>NUCLEOTIDE SEQUENCE [LARGE SCALE GENOMIC DNA]</scope>
    <source>
        <strain>ATCC BAA-588 / NCTC 13252 / RB50</strain>
    </source>
</reference>